<reference key="1">
    <citation type="journal article" date="1998" name="Science">
        <title>Genome sequence of the nematode C. elegans: a platform for investigating biology.</title>
        <authorList>
            <consortium name="The C. elegans sequencing consortium"/>
        </authorList>
    </citation>
    <scope>NUCLEOTIDE SEQUENCE [LARGE SCALE GENOMIC DNA]</scope>
    <source>
        <strain>Bristol N2</strain>
    </source>
</reference>
<comment type="similarity">
    <text evidence="2">Belongs to the LovG family.</text>
</comment>
<accession>Q18169</accession>
<feature type="chain" id="PRO_0000300884" description="Esterase C25G4.2">
    <location>
        <begin position="1"/>
        <end position="221"/>
    </location>
</feature>
<feature type="active site" description="Charge relay system" evidence="1">
    <location>
        <position position="106"/>
    </location>
</feature>
<feature type="active site" description="Charge relay system" evidence="1">
    <location>
        <position position="166"/>
    </location>
</feature>
<feature type="active site" description="Charge relay system" evidence="1">
    <location>
        <position position="194"/>
    </location>
</feature>
<dbReference type="EC" id="3.1.2.-" evidence="2"/>
<dbReference type="EMBL" id="Z70680">
    <property type="protein sequence ID" value="CAA94571.1"/>
    <property type="molecule type" value="Genomic_DNA"/>
</dbReference>
<dbReference type="PIR" id="T19468">
    <property type="entry name" value="T19468"/>
</dbReference>
<dbReference type="RefSeq" id="NP_502376.1">
    <property type="nucleotide sequence ID" value="NM_069975.8"/>
</dbReference>
<dbReference type="SMR" id="Q18169"/>
<dbReference type="BioGRID" id="43287">
    <property type="interactions" value="2"/>
</dbReference>
<dbReference type="FunCoup" id="Q18169">
    <property type="interactions" value="1762"/>
</dbReference>
<dbReference type="STRING" id="6239.C25G4.2.2"/>
<dbReference type="ESTHER" id="caeel-C25G4.2">
    <property type="family name" value="FSH1"/>
</dbReference>
<dbReference type="PaxDb" id="6239-C25G4.2.1"/>
<dbReference type="PeptideAtlas" id="Q18169"/>
<dbReference type="EnsemblMetazoa" id="C25G4.2.1">
    <property type="protein sequence ID" value="C25G4.2.1"/>
    <property type="gene ID" value="WBGene00007730"/>
</dbReference>
<dbReference type="GeneID" id="178194"/>
<dbReference type="KEGG" id="cel:CELE_C25G4.2"/>
<dbReference type="UCSC" id="C25G4.2">
    <property type="organism name" value="c. elegans"/>
</dbReference>
<dbReference type="AGR" id="WB:WBGene00007730"/>
<dbReference type="CTD" id="178194"/>
<dbReference type="WormBase" id="C25G4.2">
    <property type="protein sequence ID" value="CE05303"/>
    <property type="gene ID" value="WBGene00007730"/>
</dbReference>
<dbReference type="eggNOG" id="KOG2551">
    <property type="taxonomic scope" value="Eukaryota"/>
</dbReference>
<dbReference type="GeneTree" id="ENSGT00390000003541"/>
<dbReference type="HOGENOM" id="CLU_051938_2_3_1"/>
<dbReference type="InParanoid" id="Q18169"/>
<dbReference type="OMA" id="EEPRGWW"/>
<dbReference type="OrthoDB" id="414698at2759"/>
<dbReference type="PhylomeDB" id="Q18169"/>
<dbReference type="PRO" id="PR:Q18169"/>
<dbReference type="Proteomes" id="UP000001940">
    <property type="component" value="Chromosome IV"/>
</dbReference>
<dbReference type="Bgee" id="WBGene00007730">
    <property type="expression patterns" value="Expressed in larva and 4 other cell types or tissues"/>
</dbReference>
<dbReference type="GO" id="GO:0005737">
    <property type="term" value="C:cytoplasm"/>
    <property type="evidence" value="ECO:0000318"/>
    <property type="project" value="GO_Central"/>
</dbReference>
<dbReference type="GO" id="GO:0005634">
    <property type="term" value="C:nucleus"/>
    <property type="evidence" value="ECO:0000318"/>
    <property type="project" value="GO_Central"/>
</dbReference>
<dbReference type="GO" id="GO:0016787">
    <property type="term" value="F:hydrolase activity"/>
    <property type="evidence" value="ECO:0000318"/>
    <property type="project" value="GO_Central"/>
</dbReference>
<dbReference type="FunFam" id="3.40.50.1820:FF:000073">
    <property type="entry name" value="esterase OVCA2 isoform X6"/>
    <property type="match status" value="1"/>
</dbReference>
<dbReference type="Gene3D" id="3.40.50.1820">
    <property type="entry name" value="alpha/beta hydrolase"/>
    <property type="match status" value="1"/>
</dbReference>
<dbReference type="InterPro" id="IPR029058">
    <property type="entry name" value="AB_hydrolase_fold"/>
</dbReference>
<dbReference type="InterPro" id="IPR005645">
    <property type="entry name" value="FSH-like_dom"/>
</dbReference>
<dbReference type="InterPro" id="IPR050593">
    <property type="entry name" value="LovG"/>
</dbReference>
<dbReference type="PANTHER" id="PTHR48070">
    <property type="entry name" value="ESTERASE OVCA2"/>
    <property type="match status" value="1"/>
</dbReference>
<dbReference type="PANTHER" id="PTHR48070:SF6">
    <property type="entry name" value="ESTERASE OVCA2"/>
    <property type="match status" value="1"/>
</dbReference>
<dbReference type="Pfam" id="PF03959">
    <property type="entry name" value="FSH1"/>
    <property type="match status" value="1"/>
</dbReference>
<dbReference type="SUPFAM" id="SSF53474">
    <property type="entry name" value="alpha/beta-Hydrolases"/>
    <property type="match status" value="1"/>
</dbReference>
<sequence length="221" mass="24735">MSSQPKLRILCLHGYRQCDQSFRQKTGSTRKLVKSLAEFEFVNGVHSVAVDEHVDSSRAWWFSNNEAMSFSSRESTEVAVGFEESVAAVVKFIEENGPFDGLLGFSQGASMVHLLIAKAQLGEIKLPGIRFAIFFSGFLSLSSKHDSLTLLRIKEFPSMHVFGDADEIVARPKSEKMADMFDVEPLRIAHDGGHVVPSMSKHKEKIAGFMREQLDRKIENN</sequence>
<evidence type="ECO:0000250" key="1">
    <source>
        <dbReference type="UniProtKB" id="P38777"/>
    </source>
</evidence>
<evidence type="ECO:0000305" key="2"/>
<name>LOVG_CAEEL</name>
<protein>
    <recommendedName>
        <fullName>Esterase C25G4.2</fullName>
        <ecNumber evidence="2">3.1.2.-</ecNumber>
    </recommendedName>
</protein>
<proteinExistence type="inferred from homology"/>
<keyword id="KW-0378">Hydrolase</keyword>
<keyword id="KW-1185">Reference proteome</keyword>
<gene>
    <name type="ORF">C25G4.2</name>
</gene>
<organism>
    <name type="scientific">Caenorhabditis elegans</name>
    <dbReference type="NCBI Taxonomy" id="6239"/>
    <lineage>
        <taxon>Eukaryota</taxon>
        <taxon>Metazoa</taxon>
        <taxon>Ecdysozoa</taxon>
        <taxon>Nematoda</taxon>
        <taxon>Chromadorea</taxon>
        <taxon>Rhabditida</taxon>
        <taxon>Rhabditina</taxon>
        <taxon>Rhabditomorpha</taxon>
        <taxon>Rhabditoidea</taxon>
        <taxon>Rhabditidae</taxon>
        <taxon>Peloderinae</taxon>
        <taxon>Caenorhabditis</taxon>
    </lineage>
</organism>